<protein>
    <recommendedName>
        <fullName evidence="1">4-deoxy-L-threo-5-hexosulose-uronate ketol-isomerase</fullName>
        <ecNumber evidence="1">5.3.1.17</ecNumber>
    </recommendedName>
    <alternativeName>
        <fullName evidence="1">5-keto-4-deoxyuronate isomerase</fullName>
    </alternativeName>
    <alternativeName>
        <fullName evidence="1">DKI isomerase</fullName>
    </alternativeName>
</protein>
<comment type="function">
    <text evidence="1">Catalyzes the isomerization of 5-dehydro-4-deoxy-D-glucuronate to 3-deoxy-D-glycero-2,5-hexodiulosonate.</text>
</comment>
<comment type="catalytic activity">
    <reaction evidence="1">
        <text>5-dehydro-4-deoxy-D-glucuronate = 3-deoxy-D-glycero-2,5-hexodiulosonate</text>
        <dbReference type="Rhea" id="RHEA:23896"/>
        <dbReference type="ChEBI" id="CHEBI:17117"/>
        <dbReference type="ChEBI" id="CHEBI:29071"/>
        <dbReference type="EC" id="5.3.1.17"/>
    </reaction>
</comment>
<comment type="cofactor">
    <cofactor evidence="1">
        <name>Zn(2+)</name>
        <dbReference type="ChEBI" id="CHEBI:29105"/>
    </cofactor>
    <text evidence="1">Binds 1 zinc ion per subunit.</text>
</comment>
<comment type="pathway">
    <text evidence="1">Glycan metabolism; pectin degradation; 2-dehydro-3-deoxy-D-gluconate from pectin: step 4/5.</text>
</comment>
<comment type="similarity">
    <text evidence="1">Belongs to the KduI family.</text>
</comment>
<organism>
    <name type="scientific">Lachnospira eligens (strain ATCC 27750 / DSM 3376 / VPI C15-48 / C15-B4)</name>
    <name type="common">Eubacterium eligens</name>
    <dbReference type="NCBI Taxonomy" id="515620"/>
    <lineage>
        <taxon>Bacteria</taxon>
        <taxon>Bacillati</taxon>
        <taxon>Bacillota</taxon>
        <taxon>Clostridia</taxon>
        <taxon>Lachnospirales</taxon>
        <taxon>Lachnospiraceae</taxon>
        <taxon>Lachnospira</taxon>
    </lineage>
</organism>
<keyword id="KW-0413">Isomerase</keyword>
<keyword id="KW-0479">Metal-binding</keyword>
<keyword id="KW-1185">Reference proteome</keyword>
<keyword id="KW-0862">Zinc</keyword>
<evidence type="ECO:0000255" key="1">
    <source>
        <dbReference type="HAMAP-Rule" id="MF_00687"/>
    </source>
</evidence>
<proteinExistence type="inferred from homology"/>
<sequence length="280" mass="32155">MEVRQGANARDVKGYDTERLRNDFLIQNLFPADDFKLVYSQIDRIIVGGCMPVNKELTLEAGSELKAAYFLERREMGIFNVGGNGSVIVDGTEYKFKYRDGLYIGMGSKEIKFKSEDSSKPAKFYFNSTPAHKTYPTVFIDPEKDIKDEFKLQLGSVEGCNKRLNRKYILPGQVETCQLEMGITTLEPGSVWNTMPCHTHDRRMEVYFYFEIPEEDIVVHYMGEPTETRHIIMRSEEAVISPSWSIHSASATHAYAFIWGMAGENQDFDDMDWVDMKDLK</sequence>
<feature type="chain" id="PRO_1000212562" description="4-deoxy-L-threo-5-hexosulose-uronate ketol-isomerase">
    <location>
        <begin position="1"/>
        <end position="280"/>
    </location>
</feature>
<feature type="binding site" evidence="1">
    <location>
        <position position="198"/>
    </location>
    <ligand>
        <name>Zn(2+)</name>
        <dbReference type="ChEBI" id="CHEBI:29105"/>
    </ligand>
</feature>
<feature type="binding site" evidence="1">
    <location>
        <position position="200"/>
    </location>
    <ligand>
        <name>Zn(2+)</name>
        <dbReference type="ChEBI" id="CHEBI:29105"/>
    </ligand>
</feature>
<feature type="binding site" evidence="1">
    <location>
        <position position="205"/>
    </location>
    <ligand>
        <name>Zn(2+)</name>
        <dbReference type="ChEBI" id="CHEBI:29105"/>
    </ligand>
</feature>
<feature type="binding site" evidence="1">
    <location>
        <position position="247"/>
    </location>
    <ligand>
        <name>Zn(2+)</name>
        <dbReference type="ChEBI" id="CHEBI:29105"/>
    </ligand>
</feature>
<dbReference type="EC" id="5.3.1.17" evidence="1"/>
<dbReference type="EMBL" id="CP001104">
    <property type="protein sequence ID" value="ACR72111.1"/>
    <property type="molecule type" value="Genomic_DNA"/>
</dbReference>
<dbReference type="RefSeq" id="WP_012739346.1">
    <property type="nucleotide sequence ID" value="NC_012778.1"/>
</dbReference>
<dbReference type="SMR" id="C4Z0J8"/>
<dbReference type="STRING" id="515620.EUBELI_01111"/>
<dbReference type="GeneID" id="41355837"/>
<dbReference type="KEGG" id="eel:EUBELI_01111"/>
<dbReference type="eggNOG" id="COG3717">
    <property type="taxonomic scope" value="Bacteria"/>
</dbReference>
<dbReference type="HOGENOM" id="CLU_062609_0_0_9"/>
<dbReference type="UniPathway" id="UPA00545">
    <property type="reaction ID" value="UER00826"/>
</dbReference>
<dbReference type="Proteomes" id="UP000001476">
    <property type="component" value="Chromosome"/>
</dbReference>
<dbReference type="GO" id="GO:0008697">
    <property type="term" value="F:4-deoxy-L-threo-5-hexosulose-uronate ketol-isomerase activity"/>
    <property type="evidence" value="ECO:0007669"/>
    <property type="project" value="UniProtKB-UniRule"/>
</dbReference>
<dbReference type="GO" id="GO:0008270">
    <property type="term" value="F:zinc ion binding"/>
    <property type="evidence" value="ECO:0007669"/>
    <property type="project" value="UniProtKB-UniRule"/>
</dbReference>
<dbReference type="GO" id="GO:0019698">
    <property type="term" value="P:D-galacturonate catabolic process"/>
    <property type="evidence" value="ECO:0007669"/>
    <property type="project" value="TreeGrafter"/>
</dbReference>
<dbReference type="GO" id="GO:0042840">
    <property type="term" value="P:D-glucuronate catabolic process"/>
    <property type="evidence" value="ECO:0007669"/>
    <property type="project" value="TreeGrafter"/>
</dbReference>
<dbReference type="GO" id="GO:0045490">
    <property type="term" value="P:pectin catabolic process"/>
    <property type="evidence" value="ECO:0007669"/>
    <property type="project" value="UniProtKB-UniRule"/>
</dbReference>
<dbReference type="CDD" id="cd20491">
    <property type="entry name" value="cupin_KduI_C"/>
    <property type="match status" value="1"/>
</dbReference>
<dbReference type="CDD" id="cd20294">
    <property type="entry name" value="cupin_KduI_N"/>
    <property type="match status" value="1"/>
</dbReference>
<dbReference type="Gene3D" id="2.60.120.10">
    <property type="entry name" value="Jelly Rolls"/>
    <property type="match status" value="1"/>
</dbReference>
<dbReference type="Gene3D" id="2.60.120.520">
    <property type="entry name" value="pectin degrading enzyme 5-keto 4- deoxyuronate isomerase, domain 1"/>
    <property type="match status" value="1"/>
</dbReference>
<dbReference type="HAMAP" id="MF_00687">
    <property type="entry name" value="KduI"/>
    <property type="match status" value="1"/>
</dbReference>
<dbReference type="InterPro" id="IPR007045">
    <property type="entry name" value="KduI"/>
</dbReference>
<dbReference type="InterPro" id="IPR021120">
    <property type="entry name" value="KduI/IolB_isomerase"/>
</dbReference>
<dbReference type="InterPro" id="IPR027449">
    <property type="entry name" value="KduI_N"/>
</dbReference>
<dbReference type="InterPro" id="IPR014710">
    <property type="entry name" value="RmlC-like_jellyroll"/>
</dbReference>
<dbReference type="InterPro" id="IPR011051">
    <property type="entry name" value="RmlC_Cupin_sf"/>
</dbReference>
<dbReference type="NCBIfam" id="NF002091">
    <property type="entry name" value="PRK00924.1"/>
    <property type="match status" value="1"/>
</dbReference>
<dbReference type="PANTHER" id="PTHR38461">
    <property type="entry name" value="4-DEOXY-L-THREO-5-HEXOSULOSE-URONATE KETOL-ISOMERASE"/>
    <property type="match status" value="1"/>
</dbReference>
<dbReference type="PANTHER" id="PTHR38461:SF1">
    <property type="entry name" value="4-DEOXY-L-THREO-5-HEXOSULOSE-URONATE KETOL-ISOMERASE"/>
    <property type="match status" value="1"/>
</dbReference>
<dbReference type="Pfam" id="PF04962">
    <property type="entry name" value="KduI"/>
    <property type="match status" value="1"/>
</dbReference>
<dbReference type="PIRSF" id="PIRSF006625">
    <property type="entry name" value="KduI"/>
    <property type="match status" value="1"/>
</dbReference>
<dbReference type="SUPFAM" id="SSF51182">
    <property type="entry name" value="RmlC-like cupins"/>
    <property type="match status" value="1"/>
</dbReference>
<accession>C4Z0J8</accession>
<name>KDUI_LACE2</name>
<reference key="1">
    <citation type="journal article" date="2009" name="Proc. Natl. Acad. Sci. U.S.A.">
        <title>Characterizing a model human gut microbiota composed of members of its two dominant bacterial phyla.</title>
        <authorList>
            <person name="Mahowald M.A."/>
            <person name="Rey F.E."/>
            <person name="Seedorf H."/>
            <person name="Turnbaugh P.J."/>
            <person name="Fulton R.S."/>
            <person name="Wollam A."/>
            <person name="Shah N."/>
            <person name="Wang C."/>
            <person name="Magrini V."/>
            <person name="Wilson R.K."/>
            <person name="Cantarel B.L."/>
            <person name="Coutinho P.M."/>
            <person name="Henrissat B."/>
            <person name="Crock L.W."/>
            <person name="Russell A."/>
            <person name="Verberkmoes N.C."/>
            <person name="Hettich R.L."/>
            <person name="Gordon J.I."/>
        </authorList>
    </citation>
    <scope>NUCLEOTIDE SEQUENCE [LARGE SCALE GENOMIC DNA]</scope>
    <source>
        <strain>ATCC 27750 / DSM 3376 / VPI C15-48 / C15-B4</strain>
    </source>
</reference>
<gene>
    <name evidence="1" type="primary">kduI</name>
    <name type="ordered locus">EUBELI_01111</name>
</gene>